<sequence length="406" mass="43821">MVSVTHCDSLWFGADIITMRGGNYQLIPQGAIAVTGDKIVWIGPHAELPPIHAARQVVYEGGLITPGLIDCHTHLVFGDDRSNEFEQRLNGVSYAEIAANGGGIISTVRATRQASEQQLLEQALFRLKPLLAEGVTTIEIKSGYGLNLESEIKMLRVARRLGELLPIDVKTTCLAAHALPPEFIGQPDDYIDVVCNSIIPQVAVENLADAVDAFCEHLAFSPAQVERVFLAAQKAGLPVKLHAEQLSALRGATLAAKFHAISADHLEYATESDVQAMANAGTVAVLLPGAYYLLRETQCPPIDLFRQYKVPMALASDANPGTSPVLSLRLMLNMACTLFRMTPEEALAGVTCHAAQALGVQQTQGTLETGKLANWVHWPLSHPAELAYWLGGQLPATVVFRGEVRP</sequence>
<evidence type="ECO:0000255" key="1">
    <source>
        <dbReference type="HAMAP-Rule" id="MF_00372"/>
    </source>
</evidence>
<keyword id="KW-0963">Cytoplasm</keyword>
<keyword id="KW-0369">Histidine metabolism</keyword>
<keyword id="KW-0378">Hydrolase</keyword>
<keyword id="KW-0408">Iron</keyword>
<keyword id="KW-0479">Metal-binding</keyword>
<keyword id="KW-0862">Zinc</keyword>
<organism>
    <name type="scientific">Yersinia pestis (strain Pestoides F)</name>
    <dbReference type="NCBI Taxonomy" id="386656"/>
    <lineage>
        <taxon>Bacteria</taxon>
        <taxon>Pseudomonadati</taxon>
        <taxon>Pseudomonadota</taxon>
        <taxon>Gammaproteobacteria</taxon>
        <taxon>Enterobacterales</taxon>
        <taxon>Yersiniaceae</taxon>
        <taxon>Yersinia</taxon>
    </lineage>
</organism>
<gene>
    <name evidence="1" type="primary">hutI</name>
    <name type="ordered locus">YPDSF_1151</name>
</gene>
<comment type="function">
    <text evidence="1">Catalyzes the hydrolytic cleavage of the carbon-nitrogen bond in imidazolone-5-propanoate to yield N-formimidoyl-L-glutamate. It is the third step in the universal histidine degradation pathway.</text>
</comment>
<comment type="catalytic activity">
    <reaction evidence="1">
        <text>4-imidazolone-5-propanoate + H2O = N-formimidoyl-L-glutamate</text>
        <dbReference type="Rhea" id="RHEA:23660"/>
        <dbReference type="ChEBI" id="CHEBI:15377"/>
        <dbReference type="ChEBI" id="CHEBI:58928"/>
        <dbReference type="ChEBI" id="CHEBI:77893"/>
        <dbReference type="EC" id="3.5.2.7"/>
    </reaction>
</comment>
<comment type="cofactor">
    <cofactor evidence="1">
        <name>Zn(2+)</name>
        <dbReference type="ChEBI" id="CHEBI:29105"/>
    </cofactor>
    <cofactor evidence="1">
        <name>Fe(3+)</name>
        <dbReference type="ChEBI" id="CHEBI:29034"/>
    </cofactor>
    <text evidence="1">Binds 1 zinc or iron ion per subunit.</text>
</comment>
<comment type="pathway">
    <text evidence="1">Amino-acid degradation; L-histidine degradation into L-glutamate; N-formimidoyl-L-glutamate from L-histidine: step 3/3.</text>
</comment>
<comment type="subcellular location">
    <subcellularLocation>
        <location evidence="1">Cytoplasm</location>
    </subcellularLocation>
</comment>
<comment type="similarity">
    <text evidence="1">Belongs to the metallo-dependent hydrolases superfamily. HutI family.</text>
</comment>
<accession>A4TJT7</accession>
<proteinExistence type="inferred from homology"/>
<dbReference type="EC" id="3.5.2.7" evidence="1"/>
<dbReference type="EMBL" id="CP000668">
    <property type="protein sequence ID" value="ABP39549.1"/>
    <property type="molecule type" value="Genomic_DNA"/>
</dbReference>
<dbReference type="RefSeq" id="WP_002211281.1">
    <property type="nucleotide sequence ID" value="NZ_CP009715.1"/>
</dbReference>
<dbReference type="SMR" id="A4TJT7"/>
<dbReference type="GeneID" id="57976686"/>
<dbReference type="KEGG" id="ypp:YPDSF_1151"/>
<dbReference type="PATRIC" id="fig|386656.14.peg.2675"/>
<dbReference type="UniPathway" id="UPA00379">
    <property type="reaction ID" value="UER00551"/>
</dbReference>
<dbReference type="GO" id="GO:0005737">
    <property type="term" value="C:cytoplasm"/>
    <property type="evidence" value="ECO:0007669"/>
    <property type="project" value="UniProtKB-SubCell"/>
</dbReference>
<dbReference type="GO" id="GO:0050480">
    <property type="term" value="F:imidazolonepropionase activity"/>
    <property type="evidence" value="ECO:0007669"/>
    <property type="project" value="UniProtKB-UniRule"/>
</dbReference>
<dbReference type="GO" id="GO:0005506">
    <property type="term" value="F:iron ion binding"/>
    <property type="evidence" value="ECO:0007669"/>
    <property type="project" value="UniProtKB-UniRule"/>
</dbReference>
<dbReference type="GO" id="GO:0008270">
    <property type="term" value="F:zinc ion binding"/>
    <property type="evidence" value="ECO:0007669"/>
    <property type="project" value="UniProtKB-UniRule"/>
</dbReference>
<dbReference type="GO" id="GO:0019556">
    <property type="term" value="P:L-histidine catabolic process to glutamate and formamide"/>
    <property type="evidence" value="ECO:0007669"/>
    <property type="project" value="UniProtKB-UniPathway"/>
</dbReference>
<dbReference type="GO" id="GO:0019557">
    <property type="term" value="P:L-histidine catabolic process to glutamate and formate"/>
    <property type="evidence" value="ECO:0007669"/>
    <property type="project" value="UniProtKB-UniPathway"/>
</dbReference>
<dbReference type="CDD" id="cd01296">
    <property type="entry name" value="Imidazolone-5PH"/>
    <property type="match status" value="1"/>
</dbReference>
<dbReference type="FunFam" id="3.20.20.140:FF:000007">
    <property type="entry name" value="Imidazolonepropionase"/>
    <property type="match status" value="1"/>
</dbReference>
<dbReference type="Gene3D" id="3.20.20.140">
    <property type="entry name" value="Metal-dependent hydrolases"/>
    <property type="match status" value="1"/>
</dbReference>
<dbReference type="Gene3D" id="2.30.40.10">
    <property type="entry name" value="Urease, subunit C, domain 1"/>
    <property type="match status" value="1"/>
</dbReference>
<dbReference type="HAMAP" id="MF_00372">
    <property type="entry name" value="HutI"/>
    <property type="match status" value="1"/>
</dbReference>
<dbReference type="InterPro" id="IPR006680">
    <property type="entry name" value="Amidohydro-rel"/>
</dbReference>
<dbReference type="InterPro" id="IPR005920">
    <property type="entry name" value="HutI"/>
</dbReference>
<dbReference type="InterPro" id="IPR011059">
    <property type="entry name" value="Metal-dep_hydrolase_composite"/>
</dbReference>
<dbReference type="InterPro" id="IPR032466">
    <property type="entry name" value="Metal_Hydrolase"/>
</dbReference>
<dbReference type="NCBIfam" id="TIGR01224">
    <property type="entry name" value="hutI"/>
    <property type="match status" value="1"/>
</dbReference>
<dbReference type="PANTHER" id="PTHR42752">
    <property type="entry name" value="IMIDAZOLONEPROPIONASE"/>
    <property type="match status" value="1"/>
</dbReference>
<dbReference type="PANTHER" id="PTHR42752:SF1">
    <property type="entry name" value="IMIDAZOLONEPROPIONASE-RELATED"/>
    <property type="match status" value="1"/>
</dbReference>
<dbReference type="Pfam" id="PF01979">
    <property type="entry name" value="Amidohydro_1"/>
    <property type="match status" value="1"/>
</dbReference>
<dbReference type="SUPFAM" id="SSF51338">
    <property type="entry name" value="Composite domain of metallo-dependent hydrolases"/>
    <property type="match status" value="1"/>
</dbReference>
<dbReference type="SUPFAM" id="SSF51556">
    <property type="entry name" value="Metallo-dependent hydrolases"/>
    <property type="match status" value="1"/>
</dbReference>
<reference key="1">
    <citation type="submission" date="2007-02" db="EMBL/GenBank/DDBJ databases">
        <title>Complete sequence of chromosome of Yersinia pestis Pestoides F.</title>
        <authorList>
            <consortium name="US DOE Joint Genome Institute"/>
            <person name="Copeland A."/>
            <person name="Lucas S."/>
            <person name="Lapidus A."/>
            <person name="Barry K."/>
            <person name="Detter J.C."/>
            <person name="Glavina del Rio T."/>
            <person name="Hammon N."/>
            <person name="Israni S."/>
            <person name="Dalin E."/>
            <person name="Tice H."/>
            <person name="Pitluck S."/>
            <person name="Di Bartolo G."/>
            <person name="Chain P."/>
            <person name="Malfatti S."/>
            <person name="Shin M."/>
            <person name="Vergez L."/>
            <person name="Schmutz J."/>
            <person name="Larimer F."/>
            <person name="Land M."/>
            <person name="Hauser L."/>
            <person name="Worsham P."/>
            <person name="Chu M."/>
            <person name="Bearden S."/>
            <person name="Garcia E."/>
            <person name="Richardson P."/>
        </authorList>
    </citation>
    <scope>NUCLEOTIDE SEQUENCE [LARGE SCALE GENOMIC DNA]</scope>
    <source>
        <strain>Pestoides F</strain>
    </source>
</reference>
<feature type="chain" id="PRO_0000306543" description="Imidazolonepropionase">
    <location>
        <begin position="1"/>
        <end position="406"/>
    </location>
</feature>
<feature type="binding site" evidence="1">
    <location>
        <position position="72"/>
    </location>
    <ligand>
        <name>Fe(3+)</name>
        <dbReference type="ChEBI" id="CHEBI:29034"/>
    </ligand>
</feature>
<feature type="binding site" evidence="1">
    <location>
        <position position="72"/>
    </location>
    <ligand>
        <name>Zn(2+)</name>
        <dbReference type="ChEBI" id="CHEBI:29105"/>
    </ligand>
</feature>
<feature type="binding site" evidence="1">
    <location>
        <position position="74"/>
    </location>
    <ligand>
        <name>Fe(3+)</name>
        <dbReference type="ChEBI" id="CHEBI:29034"/>
    </ligand>
</feature>
<feature type="binding site" evidence="1">
    <location>
        <position position="74"/>
    </location>
    <ligand>
        <name>Zn(2+)</name>
        <dbReference type="ChEBI" id="CHEBI:29105"/>
    </ligand>
</feature>
<feature type="binding site" evidence="1">
    <location>
        <position position="81"/>
    </location>
    <ligand>
        <name>4-imidazolone-5-propanoate</name>
        <dbReference type="ChEBI" id="CHEBI:77893"/>
    </ligand>
</feature>
<feature type="binding site" evidence="1">
    <location>
        <position position="144"/>
    </location>
    <ligand>
        <name>4-imidazolone-5-propanoate</name>
        <dbReference type="ChEBI" id="CHEBI:77893"/>
    </ligand>
</feature>
<feature type="binding site" evidence="1">
    <location>
        <position position="144"/>
    </location>
    <ligand>
        <name>N-formimidoyl-L-glutamate</name>
        <dbReference type="ChEBI" id="CHEBI:58928"/>
    </ligand>
</feature>
<feature type="binding site" evidence="1">
    <location>
        <position position="177"/>
    </location>
    <ligand>
        <name>4-imidazolone-5-propanoate</name>
        <dbReference type="ChEBI" id="CHEBI:77893"/>
    </ligand>
</feature>
<feature type="binding site" evidence="1">
    <location>
        <position position="242"/>
    </location>
    <ligand>
        <name>Fe(3+)</name>
        <dbReference type="ChEBI" id="CHEBI:29034"/>
    </ligand>
</feature>
<feature type="binding site" evidence="1">
    <location>
        <position position="242"/>
    </location>
    <ligand>
        <name>Zn(2+)</name>
        <dbReference type="ChEBI" id="CHEBI:29105"/>
    </ligand>
</feature>
<feature type="binding site" evidence="1">
    <location>
        <position position="245"/>
    </location>
    <ligand>
        <name>4-imidazolone-5-propanoate</name>
        <dbReference type="ChEBI" id="CHEBI:77893"/>
    </ligand>
</feature>
<feature type="binding site" evidence="1">
    <location>
        <position position="317"/>
    </location>
    <ligand>
        <name>Fe(3+)</name>
        <dbReference type="ChEBI" id="CHEBI:29034"/>
    </ligand>
</feature>
<feature type="binding site" evidence="1">
    <location>
        <position position="317"/>
    </location>
    <ligand>
        <name>Zn(2+)</name>
        <dbReference type="ChEBI" id="CHEBI:29105"/>
    </ligand>
</feature>
<feature type="binding site" evidence="1">
    <location>
        <position position="319"/>
    </location>
    <ligand>
        <name>N-formimidoyl-L-glutamate</name>
        <dbReference type="ChEBI" id="CHEBI:58928"/>
    </ligand>
</feature>
<feature type="binding site" evidence="1">
    <location>
        <position position="321"/>
    </location>
    <ligand>
        <name>N-formimidoyl-L-glutamate</name>
        <dbReference type="ChEBI" id="CHEBI:58928"/>
    </ligand>
</feature>
<feature type="binding site" evidence="1">
    <location>
        <position position="322"/>
    </location>
    <ligand>
        <name>4-imidazolone-5-propanoate</name>
        <dbReference type="ChEBI" id="CHEBI:77893"/>
    </ligand>
</feature>
<protein>
    <recommendedName>
        <fullName evidence="1">Imidazolonepropionase</fullName>
        <ecNumber evidence="1">3.5.2.7</ecNumber>
    </recommendedName>
    <alternativeName>
        <fullName evidence="1">Imidazolone-5-propionate hydrolase</fullName>
    </alternativeName>
</protein>
<name>HUTI_YERPP</name>